<keyword id="KW-0028">Amino-acid biosynthesis</keyword>
<keyword id="KW-0963">Cytoplasm</keyword>
<keyword id="KW-0220">Diaminopimelate biosynthesis</keyword>
<keyword id="KW-0456">Lyase</keyword>
<keyword id="KW-0457">Lysine biosynthesis</keyword>
<keyword id="KW-0704">Schiff base</keyword>
<comment type="function">
    <text evidence="1">Catalyzes the condensation of (S)-aspartate-beta-semialdehyde [(S)-ASA] and pyruvate to 4-hydroxy-tetrahydrodipicolinate (HTPA).</text>
</comment>
<comment type="catalytic activity">
    <reaction evidence="1">
        <text>L-aspartate 4-semialdehyde + pyruvate = (2S,4S)-4-hydroxy-2,3,4,5-tetrahydrodipicolinate + H2O + H(+)</text>
        <dbReference type="Rhea" id="RHEA:34171"/>
        <dbReference type="ChEBI" id="CHEBI:15361"/>
        <dbReference type="ChEBI" id="CHEBI:15377"/>
        <dbReference type="ChEBI" id="CHEBI:15378"/>
        <dbReference type="ChEBI" id="CHEBI:67139"/>
        <dbReference type="ChEBI" id="CHEBI:537519"/>
        <dbReference type="EC" id="4.3.3.7"/>
    </reaction>
</comment>
<comment type="pathway">
    <text evidence="1">Amino-acid biosynthesis; L-lysine biosynthesis via DAP pathway; (S)-tetrahydrodipicolinate from L-aspartate: step 3/4.</text>
</comment>
<comment type="subunit">
    <text evidence="1">Homotetramer; dimer of dimers.</text>
</comment>
<comment type="subcellular location">
    <subcellularLocation>
        <location evidence="1">Cytoplasm</location>
    </subcellularLocation>
</comment>
<comment type="similarity">
    <text evidence="1">Belongs to the DapA family.</text>
</comment>
<comment type="caution">
    <text evidence="2">Was originally thought to be a dihydrodipicolinate synthase (DHDPS), catalyzing the condensation of (S)-aspartate-beta-semialdehyde [(S)-ASA] and pyruvate to dihydrodipicolinate (DHDP). However, it was shown in E.coli that the product of the enzymatic reaction is not dihydrodipicolinate but in fact (4S)-4-hydroxy-2,3,4,5-tetrahydro-(2S)-dipicolinic acid (HTPA), and that the consecutive dehydration reaction leading to DHDP is not spontaneous but catalyzed by DapB.</text>
</comment>
<feature type="chain" id="PRO_1000124018" description="4-hydroxy-tetrahydrodipicolinate synthase">
    <location>
        <begin position="1"/>
        <end position="301"/>
    </location>
</feature>
<feature type="active site" description="Proton donor/acceptor" evidence="1">
    <location>
        <position position="143"/>
    </location>
</feature>
<feature type="active site" description="Schiff-base intermediate with substrate" evidence="1">
    <location>
        <position position="171"/>
    </location>
</feature>
<feature type="binding site" evidence="1">
    <location>
        <position position="57"/>
    </location>
    <ligand>
        <name>pyruvate</name>
        <dbReference type="ChEBI" id="CHEBI:15361"/>
    </ligand>
</feature>
<feature type="binding site" evidence="1">
    <location>
        <position position="211"/>
    </location>
    <ligand>
        <name>pyruvate</name>
        <dbReference type="ChEBI" id="CHEBI:15361"/>
    </ligand>
</feature>
<feature type="site" description="Part of a proton relay during catalysis" evidence="1">
    <location>
        <position position="56"/>
    </location>
</feature>
<feature type="site" description="Part of a proton relay during catalysis" evidence="1">
    <location>
        <position position="117"/>
    </location>
</feature>
<dbReference type="EC" id="4.3.3.7" evidence="1"/>
<dbReference type="EMBL" id="CP000605">
    <property type="protein sequence ID" value="ACD98397.1"/>
    <property type="molecule type" value="Genomic_DNA"/>
</dbReference>
<dbReference type="RefSeq" id="WP_007053723.1">
    <property type="nucleotide sequence ID" value="NZ_AABM02000002.1"/>
</dbReference>
<dbReference type="SMR" id="B3DTC8"/>
<dbReference type="KEGG" id="blj:BLD_0951"/>
<dbReference type="HOGENOM" id="CLU_049343_7_1_11"/>
<dbReference type="UniPathway" id="UPA00034">
    <property type="reaction ID" value="UER00017"/>
</dbReference>
<dbReference type="Proteomes" id="UP000002419">
    <property type="component" value="Chromosome"/>
</dbReference>
<dbReference type="GO" id="GO:0005829">
    <property type="term" value="C:cytosol"/>
    <property type="evidence" value="ECO:0007669"/>
    <property type="project" value="TreeGrafter"/>
</dbReference>
<dbReference type="GO" id="GO:0008840">
    <property type="term" value="F:4-hydroxy-tetrahydrodipicolinate synthase activity"/>
    <property type="evidence" value="ECO:0007669"/>
    <property type="project" value="UniProtKB-UniRule"/>
</dbReference>
<dbReference type="GO" id="GO:0019877">
    <property type="term" value="P:diaminopimelate biosynthetic process"/>
    <property type="evidence" value="ECO:0007669"/>
    <property type="project" value="UniProtKB-UniRule"/>
</dbReference>
<dbReference type="GO" id="GO:0009089">
    <property type="term" value="P:lysine biosynthetic process via diaminopimelate"/>
    <property type="evidence" value="ECO:0007669"/>
    <property type="project" value="UniProtKB-UniRule"/>
</dbReference>
<dbReference type="CDD" id="cd00950">
    <property type="entry name" value="DHDPS"/>
    <property type="match status" value="1"/>
</dbReference>
<dbReference type="Gene3D" id="3.20.20.70">
    <property type="entry name" value="Aldolase class I"/>
    <property type="match status" value="1"/>
</dbReference>
<dbReference type="HAMAP" id="MF_00418">
    <property type="entry name" value="DapA"/>
    <property type="match status" value="1"/>
</dbReference>
<dbReference type="InterPro" id="IPR013785">
    <property type="entry name" value="Aldolase_TIM"/>
</dbReference>
<dbReference type="InterPro" id="IPR005263">
    <property type="entry name" value="DapA"/>
</dbReference>
<dbReference type="InterPro" id="IPR002220">
    <property type="entry name" value="DapA-like"/>
</dbReference>
<dbReference type="InterPro" id="IPR020625">
    <property type="entry name" value="Schiff_base-form_aldolases_AS"/>
</dbReference>
<dbReference type="InterPro" id="IPR020624">
    <property type="entry name" value="Schiff_base-form_aldolases_CS"/>
</dbReference>
<dbReference type="NCBIfam" id="TIGR00674">
    <property type="entry name" value="dapA"/>
    <property type="match status" value="1"/>
</dbReference>
<dbReference type="PANTHER" id="PTHR12128:SF66">
    <property type="entry name" value="4-HYDROXY-2-OXOGLUTARATE ALDOLASE, MITOCHONDRIAL"/>
    <property type="match status" value="1"/>
</dbReference>
<dbReference type="PANTHER" id="PTHR12128">
    <property type="entry name" value="DIHYDRODIPICOLINATE SYNTHASE"/>
    <property type="match status" value="1"/>
</dbReference>
<dbReference type="Pfam" id="PF00701">
    <property type="entry name" value="DHDPS"/>
    <property type="match status" value="1"/>
</dbReference>
<dbReference type="PIRSF" id="PIRSF001365">
    <property type="entry name" value="DHDPS"/>
    <property type="match status" value="1"/>
</dbReference>
<dbReference type="PRINTS" id="PR00146">
    <property type="entry name" value="DHPICSNTHASE"/>
</dbReference>
<dbReference type="SMART" id="SM01130">
    <property type="entry name" value="DHDPS"/>
    <property type="match status" value="1"/>
</dbReference>
<dbReference type="SUPFAM" id="SSF51569">
    <property type="entry name" value="Aldolase"/>
    <property type="match status" value="1"/>
</dbReference>
<dbReference type="PROSITE" id="PS00665">
    <property type="entry name" value="DHDPS_1"/>
    <property type="match status" value="1"/>
</dbReference>
<dbReference type="PROSITE" id="PS00666">
    <property type="entry name" value="DHDPS_2"/>
    <property type="match status" value="1"/>
</dbReference>
<sequence length="301" mass="31850">MSEHDMHLLDSAPFGRILPAMVTPMKSDGSVDFAAAQKLAKYLVADGADGLVVNGTTGESPVTHMDEKVELVRAVKEVVDVPVISGAGSNDTAHTVRMVEQTQEAGADAVLVVMPYYSRPSQDGIVGHYKAVDESAEKPIIVYDVPGRTGLKVKVGTYDRLAELEHVKAVKDATGDLAAAVEKQQRTGLAWYSGDDGLFLPFLSIGAVGIISVIAHVASNPMQQLVQAFDRGDITTARRLANQLAPLVHALNGDGYQAVMAKAALKVKGVIPSTTMRLPNIGPDATQLDKAEEGMRAAGLL</sequence>
<gene>
    <name evidence="1" type="primary">dapA</name>
    <name type="ordered locus">BLD_0951</name>
</gene>
<evidence type="ECO:0000255" key="1">
    <source>
        <dbReference type="HAMAP-Rule" id="MF_00418"/>
    </source>
</evidence>
<evidence type="ECO:0000305" key="2"/>
<proteinExistence type="inferred from homology"/>
<accession>B3DTC8</accession>
<name>DAPA_BIFLD</name>
<reference key="1">
    <citation type="journal article" date="2008" name="BMC Genomics">
        <title>Comparative genomic analysis of the gut bacterium Bifidobacterium longum reveals loci susceptible to deletion during pure culture growth.</title>
        <authorList>
            <person name="Lee J.H."/>
            <person name="Karamychev V.N."/>
            <person name="Kozyavkin S.A."/>
            <person name="Mills D."/>
            <person name="Pavlov A.R."/>
            <person name="Pavlova N.V."/>
            <person name="Polouchine N.N."/>
            <person name="Richardson P.M."/>
            <person name="Shakhova V.V."/>
            <person name="Slesarev A.I."/>
            <person name="Weimer B."/>
            <person name="O'Sullivan D.J."/>
        </authorList>
    </citation>
    <scope>NUCLEOTIDE SEQUENCE [LARGE SCALE GENOMIC DNA]</scope>
    <source>
        <strain>DJO10A</strain>
    </source>
</reference>
<organism>
    <name type="scientific">Bifidobacterium longum (strain DJO10A)</name>
    <dbReference type="NCBI Taxonomy" id="205913"/>
    <lineage>
        <taxon>Bacteria</taxon>
        <taxon>Bacillati</taxon>
        <taxon>Actinomycetota</taxon>
        <taxon>Actinomycetes</taxon>
        <taxon>Bifidobacteriales</taxon>
        <taxon>Bifidobacteriaceae</taxon>
        <taxon>Bifidobacterium</taxon>
    </lineage>
</organism>
<protein>
    <recommendedName>
        <fullName evidence="1">4-hydroxy-tetrahydrodipicolinate synthase</fullName>
        <shortName evidence="1">HTPA synthase</shortName>
        <ecNumber evidence="1">4.3.3.7</ecNumber>
    </recommendedName>
</protein>